<comment type="function">
    <text evidence="1">One of the components of the core complex of photosystem II (PSII). PSII is a light-driven water:plastoquinone oxidoreductase that uses light energy to abstract electrons from H(2)O, generating O(2) and a proton gradient subsequently used for ATP formation. It consists of a core antenna complex that captures photons, and an electron transfer chain that converts photonic excitation into a charge separation. This subunit is found at the monomer-monomer interface and is required for correct PSII assembly and/or dimerization.</text>
</comment>
<comment type="subunit">
    <text evidence="1">PSII is composed of 1 copy each of membrane proteins PsbA, PsbB, PsbC, PsbD, PsbE, PsbF, PsbH, PsbI, PsbJ, PsbK, PsbL, PsbM, PsbT, PsbX, PsbY, PsbZ, Psb30/Ycf12, at least 3 peripheral proteins of the oxygen-evolving complex and a large number of cofactors. It forms dimeric complexes.</text>
</comment>
<comment type="subcellular location">
    <subcellularLocation>
        <location evidence="1">Plastid</location>
        <location evidence="1">Chloroplast thylakoid membrane</location>
        <topology evidence="1">Single-pass membrane protein</topology>
    </subcellularLocation>
</comment>
<comment type="similarity">
    <text evidence="1">Belongs to the PsbL family.</text>
</comment>
<protein>
    <recommendedName>
        <fullName evidence="1">Photosystem II reaction center protein L</fullName>
        <shortName evidence="1">PSII-L</shortName>
    </recommendedName>
</protein>
<gene>
    <name evidence="1" type="primary">psbL</name>
</gene>
<geneLocation type="chloroplast"/>
<reference key="1">
    <citation type="journal article" date="2000" name="Am. J. Bot.">
        <title>Utility of 17 chloroplast genes for inferring the phylogeny of the basal angiosperms.</title>
        <authorList>
            <person name="Graham S.W."/>
            <person name="Olmstead R.G."/>
        </authorList>
    </citation>
    <scope>NUCLEOTIDE SEQUENCE [GENOMIC DNA]</scope>
</reference>
<proteinExistence type="inferred from homology"/>
<organism>
    <name type="scientific">Lactoris fernandeziana</name>
    <dbReference type="NCBI Taxonomy" id="22303"/>
    <lineage>
        <taxon>Eukaryota</taxon>
        <taxon>Viridiplantae</taxon>
        <taxon>Streptophyta</taxon>
        <taxon>Embryophyta</taxon>
        <taxon>Tracheophyta</taxon>
        <taxon>Spermatophyta</taxon>
        <taxon>Magnoliopsida</taxon>
        <taxon>Magnoliidae</taxon>
        <taxon>Piperales</taxon>
        <taxon>Lactoridaceae</taxon>
        <taxon>Lactoris</taxon>
    </lineage>
</organism>
<dbReference type="EMBL" id="AF123839">
    <property type="protein sequence ID" value="AAG26236.1"/>
    <property type="molecule type" value="Genomic_DNA"/>
</dbReference>
<dbReference type="RefSeq" id="YP_010447649.1">
    <property type="nucleotide sequence ID" value="NC_065383.1"/>
</dbReference>
<dbReference type="SMR" id="Q7J1A6"/>
<dbReference type="GeneID" id="73954357"/>
<dbReference type="GO" id="GO:0009535">
    <property type="term" value="C:chloroplast thylakoid membrane"/>
    <property type="evidence" value="ECO:0007669"/>
    <property type="project" value="UniProtKB-SubCell"/>
</dbReference>
<dbReference type="GO" id="GO:0009539">
    <property type="term" value="C:photosystem II reaction center"/>
    <property type="evidence" value="ECO:0007669"/>
    <property type="project" value="InterPro"/>
</dbReference>
<dbReference type="GO" id="GO:0015979">
    <property type="term" value="P:photosynthesis"/>
    <property type="evidence" value="ECO:0007669"/>
    <property type="project" value="UniProtKB-UniRule"/>
</dbReference>
<dbReference type="HAMAP" id="MF_01317">
    <property type="entry name" value="PSII_PsbL"/>
    <property type="match status" value="1"/>
</dbReference>
<dbReference type="InterPro" id="IPR003372">
    <property type="entry name" value="PSII_PsbL"/>
</dbReference>
<dbReference type="InterPro" id="IPR037266">
    <property type="entry name" value="PSII_PsbL_sf"/>
</dbReference>
<dbReference type="NCBIfam" id="NF001972">
    <property type="entry name" value="PRK00753.1"/>
    <property type="match status" value="1"/>
</dbReference>
<dbReference type="Pfam" id="PF02419">
    <property type="entry name" value="PsbL"/>
    <property type="match status" value="1"/>
</dbReference>
<dbReference type="SUPFAM" id="SSF161017">
    <property type="entry name" value="Photosystem II reaction center protein L, PsbL"/>
    <property type="match status" value="1"/>
</dbReference>
<evidence type="ECO:0000255" key="1">
    <source>
        <dbReference type="HAMAP-Rule" id="MF_01317"/>
    </source>
</evidence>
<keyword id="KW-0150">Chloroplast</keyword>
<keyword id="KW-0472">Membrane</keyword>
<keyword id="KW-0602">Photosynthesis</keyword>
<keyword id="KW-0604">Photosystem II</keyword>
<keyword id="KW-0934">Plastid</keyword>
<keyword id="KW-0674">Reaction center</keyword>
<keyword id="KW-0793">Thylakoid</keyword>
<keyword id="KW-0812">Transmembrane</keyword>
<keyword id="KW-1133">Transmembrane helix</keyword>
<accession>Q7J1A6</accession>
<feature type="chain" id="PRO_0000219733" description="Photosystem II reaction center protein L">
    <location>
        <begin position="1"/>
        <end position="38"/>
    </location>
</feature>
<feature type="transmembrane region" description="Helical" evidence="1">
    <location>
        <begin position="17"/>
        <end position="37"/>
    </location>
</feature>
<sequence length="38" mass="4497">MTQSNPNEQNVELNRTSLYWGLLLIFVLAVLFSNYFFN</sequence>
<name>PSBL_LACFR</name>